<evidence type="ECO:0000250" key="1">
    <source>
        <dbReference type="UniProtKB" id="P04798"/>
    </source>
</evidence>
<evidence type="ECO:0000255" key="2"/>
<evidence type="ECO:0000269" key="3">
    <source>
    </source>
</evidence>
<evidence type="ECO:0000269" key="4">
    <source>
    </source>
</evidence>
<evidence type="ECO:0000303" key="5">
    <source>
    </source>
</evidence>
<evidence type="ECO:0000305" key="6"/>
<name>ASTB_ASPTN</name>
<gene>
    <name evidence="5" type="primary">astB</name>
    <name type="ORF">ATEG_04417</name>
</gene>
<organism>
    <name type="scientific">Aspergillus terreus (strain NIH 2624 / FGSC A1156)</name>
    <dbReference type="NCBI Taxonomy" id="341663"/>
    <lineage>
        <taxon>Eukaryota</taxon>
        <taxon>Fungi</taxon>
        <taxon>Dikarya</taxon>
        <taxon>Ascomycota</taxon>
        <taxon>Pezizomycotina</taxon>
        <taxon>Eurotiomycetes</taxon>
        <taxon>Eurotiomycetidae</taxon>
        <taxon>Eurotiales</taxon>
        <taxon>Aspergillaceae</taxon>
        <taxon>Aspergillus</taxon>
        <taxon>Aspergillus subgen. Circumdati</taxon>
    </lineage>
</organism>
<keyword id="KW-0349">Heme</keyword>
<keyword id="KW-0408">Iron</keyword>
<keyword id="KW-0472">Membrane</keyword>
<keyword id="KW-0479">Metal-binding</keyword>
<keyword id="KW-0503">Monooxygenase</keyword>
<keyword id="KW-0560">Oxidoreductase</keyword>
<keyword id="KW-1185">Reference proteome</keyword>
<keyword id="KW-0812">Transmembrane</keyword>
<keyword id="KW-1133">Transmembrane helix</keyword>
<accession>Q0CPG7</accession>
<proteinExistence type="evidence at protein level"/>
<comment type="function">
    <text evidence="3 4">Cytochrome P450 monooxygenase; part of the gene cluster that mediates the biosynthesis of the sesquiterpenoid aspterric acid (AA), an inhibitor of dihydroxy-acid dehydratase (DHAD) effective as an herbicide (PubMed:29995859, PubMed:39511739). AstB catalyzes the second step within the pathway and converts (-)-daucane produced by the terpene cyclase astA into an alpha-epoxy carboxylate intermediate which is further converted into the tricyclic aspterric acid by the cytochrome P450 monooxygenase astC (PubMed:29995859).</text>
</comment>
<comment type="cofactor">
    <cofactor evidence="1">
        <name>heme</name>
        <dbReference type="ChEBI" id="CHEBI:30413"/>
    </cofactor>
</comment>
<comment type="pathway">
    <text evidence="3 4">Secondary metabolite biosynthesis; terpenoid biosynthesis.</text>
</comment>
<comment type="subcellular location">
    <subcellularLocation>
        <location evidence="2">Membrane</location>
        <topology evidence="2">Single-pass membrane protein</topology>
    </subcellularLocation>
</comment>
<comment type="biotechnology">
    <text evidence="3 4">The fungal sesquiterpenoid aspterric acid (AA) is a submicromolar inhibitor of dihydroxy-acid dehydratase (DHAD) in plants and is effective as an herbicide in spray applications.</text>
</comment>
<comment type="similarity">
    <text evidence="6">Belongs to the cytochrome P450 family.</text>
</comment>
<dbReference type="EC" id="1.-.-.-" evidence="3"/>
<dbReference type="EMBL" id="CH476599">
    <property type="protein sequence ID" value="EAU34864.1"/>
    <property type="molecule type" value="Genomic_DNA"/>
</dbReference>
<dbReference type="RefSeq" id="XP_001213595.1">
    <property type="nucleotide sequence ID" value="XM_001213595.1"/>
</dbReference>
<dbReference type="STRING" id="341663.Q0CPG7"/>
<dbReference type="EnsemblFungi" id="EAU34864">
    <property type="protein sequence ID" value="EAU34864"/>
    <property type="gene ID" value="ATEG_04417"/>
</dbReference>
<dbReference type="GeneID" id="4320416"/>
<dbReference type="VEuPathDB" id="FungiDB:ATEG_04417"/>
<dbReference type="eggNOG" id="KOG0158">
    <property type="taxonomic scope" value="Eukaryota"/>
</dbReference>
<dbReference type="HOGENOM" id="CLU_001570_14_4_1"/>
<dbReference type="OMA" id="RIVGYPK"/>
<dbReference type="OrthoDB" id="3184603at2759"/>
<dbReference type="UniPathway" id="UPA00213"/>
<dbReference type="Proteomes" id="UP000007963">
    <property type="component" value="Unassembled WGS sequence"/>
</dbReference>
<dbReference type="GO" id="GO:0016020">
    <property type="term" value="C:membrane"/>
    <property type="evidence" value="ECO:0007669"/>
    <property type="project" value="UniProtKB-SubCell"/>
</dbReference>
<dbReference type="GO" id="GO:0020037">
    <property type="term" value="F:heme binding"/>
    <property type="evidence" value="ECO:0007669"/>
    <property type="project" value="InterPro"/>
</dbReference>
<dbReference type="GO" id="GO:0005506">
    <property type="term" value="F:iron ion binding"/>
    <property type="evidence" value="ECO:0007669"/>
    <property type="project" value="InterPro"/>
</dbReference>
<dbReference type="GO" id="GO:0004497">
    <property type="term" value="F:monooxygenase activity"/>
    <property type="evidence" value="ECO:0007669"/>
    <property type="project" value="UniProtKB-KW"/>
</dbReference>
<dbReference type="GO" id="GO:0016705">
    <property type="term" value="F:oxidoreductase activity, acting on paired donors, with incorporation or reduction of molecular oxygen"/>
    <property type="evidence" value="ECO:0007669"/>
    <property type="project" value="InterPro"/>
</dbReference>
<dbReference type="CDD" id="cd11062">
    <property type="entry name" value="CYP58-like"/>
    <property type="match status" value="1"/>
</dbReference>
<dbReference type="Gene3D" id="1.10.630.10">
    <property type="entry name" value="Cytochrome P450"/>
    <property type="match status" value="1"/>
</dbReference>
<dbReference type="InterPro" id="IPR001128">
    <property type="entry name" value="Cyt_P450"/>
</dbReference>
<dbReference type="InterPro" id="IPR017972">
    <property type="entry name" value="Cyt_P450_CS"/>
</dbReference>
<dbReference type="InterPro" id="IPR002401">
    <property type="entry name" value="Cyt_P450_E_grp-I"/>
</dbReference>
<dbReference type="InterPro" id="IPR036396">
    <property type="entry name" value="Cyt_P450_sf"/>
</dbReference>
<dbReference type="InterPro" id="IPR050121">
    <property type="entry name" value="Cytochrome_P450_monoxygenase"/>
</dbReference>
<dbReference type="PANTHER" id="PTHR24305">
    <property type="entry name" value="CYTOCHROME P450"/>
    <property type="match status" value="1"/>
</dbReference>
<dbReference type="PANTHER" id="PTHR24305:SF157">
    <property type="entry name" value="N-ACETYLTRYPTOPHAN 6-HYDROXYLASE IVOC-RELATED"/>
    <property type="match status" value="1"/>
</dbReference>
<dbReference type="Pfam" id="PF00067">
    <property type="entry name" value="p450"/>
    <property type="match status" value="1"/>
</dbReference>
<dbReference type="PRINTS" id="PR00463">
    <property type="entry name" value="EP450I"/>
</dbReference>
<dbReference type="PRINTS" id="PR00385">
    <property type="entry name" value="P450"/>
</dbReference>
<dbReference type="SUPFAM" id="SSF48264">
    <property type="entry name" value="Cytochrome P450"/>
    <property type="match status" value="1"/>
</dbReference>
<dbReference type="PROSITE" id="PS00086">
    <property type="entry name" value="CYTOCHROME_P450"/>
    <property type="match status" value="1"/>
</dbReference>
<protein>
    <recommendedName>
        <fullName evidence="5">Cytochrome P450 monooxygenase astB</fullName>
        <ecNumber evidence="3">1.-.-.-</ecNumber>
    </recommendedName>
    <alternativeName>
        <fullName evidence="5">Aspterric acid biosynthesis cluster protein B</fullName>
    </alternativeName>
</protein>
<reference key="1">
    <citation type="submission" date="2005-09" db="EMBL/GenBank/DDBJ databases">
        <title>Annotation of the Aspergillus terreus NIH2624 genome.</title>
        <authorList>
            <person name="Birren B.W."/>
            <person name="Lander E.S."/>
            <person name="Galagan J.E."/>
            <person name="Nusbaum C."/>
            <person name="Devon K."/>
            <person name="Henn M."/>
            <person name="Ma L.-J."/>
            <person name="Jaffe D.B."/>
            <person name="Butler J."/>
            <person name="Alvarez P."/>
            <person name="Gnerre S."/>
            <person name="Grabherr M."/>
            <person name="Kleber M."/>
            <person name="Mauceli E.W."/>
            <person name="Brockman W."/>
            <person name="Rounsley S."/>
            <person name="Young S.K."/>
            <person name="LaButti K."/>
            <person name="Pushparaj V."/>
            <person name="DeCaprio D."/>
            <person name="Crawford M."/>
            <person name="Koehrsen M."/>
            <person name="Engels R."/>
            <person name="Montgomery P."/>
            <person name="Pearson M."/>
            <person name="Howarth C."/>
            <person name="Larson L."/>
            <person name="Luoma S."/>
            <person name="White J."/>
            <person name="Alvarado L."/>
            <person name="Kodira C.D."/>
            <person name="Zeng Q."/>
            <person name="Oleary S."/>
            <person name="Yandava C."/>
            <person name="Denning D.W."/>
            <person name="Nierman W.C."/>
            <person name="Milne T."/>
            <person name="Madden K."/>
        </authorList>
    </citation>
    <scope>NUCLEOTIDE SEQUENCE [LARGE SCALE GENOMIC DNA]</scope>
    <source>
        <strain>NIH 2624 / FGSC A1156</strain>
    </source>
</reference>
<reference key="2">
    <citation type="journal article" date="2018" name="Nature">
        <title>Resistance-gene-directed discovery of a natural-product herbicide with a new mode of action.</title>
        <authorList>
            <person name="Yan Y."/>
            <person name="Liu Q."/>
            <person name="Zang X."/>
            <person name="Yuan S."/>
            <person name="Bat-Erdene U."/>
            <person name="Nguyen C."/>
            <person name="Gan J."/>
            <person name="Zhou J."/>
            <person name="Jacobsen S.E."/>
            <person name="Tang Y."/>
        </authorList>
    </citation>
    <scope>FUNCTION</scope>
    <scope>CATALYTIC ACTIVITY</scope>
    <scope>PATHWAY</scope>
    <scope>BIOTECHNOLOGY</scope>
</reference>
<reference key="3">
    <citation type="journal article" date="2024" name="J. Agric. Food Chem.">
        <title>Yeast synthesis and herbicidal activity evaluation of aspterric acid.</title>
        <authorList>
            <person name="Zhou Z."/>
            <person name="Zhang Y."/>
            <person name="Wu Q."/>
            <person name="Hou X."/>
            <person name="Zhang B."/>
        </authorList>
    </citation>
    <scope>FUNCTION</scope>
    <scope>PATHWAY</scope>
    <scope>BIOTECHNOLOGY</scope>
</reference>
<feature type="chain" id="PRO_0000462097" description="Cytochrome P450 monooxygenase astB">
    <location>
        <begin position="1"/>
        <end position="512"/>
    </location>
</feature>
<feature type="transmembrane region" description="Helical" evidence="2">
    <location>
        <begin position="5"/>
        <end position="25"/>
    </location>
</feature>
<feature type="binding site" description="axial binding residue" evidence="1">
    <location>
        <position position="452"/>
    </location>
    <ligand>
        <name>heme</name>
        <dbReference type="ChEBI" id="CHEBI:30413"/>
    </ligand>
    <ligandPart>
        <name>Fe</name>
        <dbReference type="ChEBI" id="CHEBI:18248"/>
    </ligandPart>
</feature>
<sequence length="512" mass="57146">MLFQDLSFPAAIGAVFGAVAISVAARCIYDLFFHPLRNFPGPKRAAIWSFYEFYYDVIRDGTYLWEIEKMHQKYGPIVRINSRSLHIHDPEYFNTIYAGSGRKVNKELSAVSGYTFPHSTISTLDHDLHRKRRAIVSPYFSKRAIAEIEPVIHERLNVLISRLAEAKGSIVDLTSAFSAYTADVVTYHFYGTHANYIGSKDFKYGLKDALTVLLNLYNLTRFLPVPANTLKNLPLPILGLINPNFPLVVSAREANKKMVLGYLNKPDEDKKAMKDARSKSVIVSALTDPNVPDAEKTLDRLLDEGETIIFAGIDTTARTLGVALFHLLNNKDVLMKLRKELQAVAKPDGQQWTTTELEAVPYMRGVVQEAIRLAYGLVVRIPRISPHEALRYNGFVIPPGTPVSQSTYLVNNDPSVFPNPQVFDPERWVKAAQDGVSLDKYMVSFSKGSRGCLGINLAYAKLYLGIARVATSLDMELFETTAKAISVYHTRGFAFPKEGDGAVKARVMGLCK</sequence>